<keyword id="KW-0460">Magnesium</keyword>
<keyword id="KW-0548">Nucleotidyltransferase</keyword>
<keyword id="KW-1185">Reference proteome</keyword>
<keyword id="KW-0808">Transferase</keyword>
<dbReference type="EC" id="2.7.7.9"/>
<dbReference type="EMBL" id="AE005174">
    <property type="protein sequence ID" value="AAG56093.1"/>
    <property type="molecule type" value="Genomic_DNA"/>
</dbReference>
<dbReference type="EMBL" id="BA000007">
    <property type="protein sequence ID" value="BAB35161.1"/>
    <property type="molecule type" value="Genomic_DNA"/>
</dbReference>
<dbReference type="PIR" id="A85704">
    <property type="entry name" value="A85704"/>
</dbReference>
<dbReference type="PIR" id="B90846">
    <property type="entry name" value="B90846"/>
</dbReference>
<dbReference type="RefSeq" id="NP_309765.1">
    <property type="nucleotide sequence ID" value="NC_002695.1"/>
</dbReference>
<dbReference type="RefSeq" id="WP_000718995.1">
    <property type="nucleotide sequence ID" value="NZ_VOAI01000031.1"/>
</dbReference>
<dbReference type="SMR" id="P0AEP5"/>
<dbReference type="STRING" id="155864.Z2012"/>
<dbReference type="GeneID" id="913114"/>
<dbReference type="GeneID" id="93775302"/>
<dbReference type="KEGG" id="ece:Z2012"/>
<dbReference type="KEGG" id="ecs:ECs_1738"/>
<dbReference type="PATRIC" id="fig|386585.9.peg.1838"/>
<dbReference type="eggNOG" id="COG1210">
    <property type="taxonomic scope" value="Bacteria"/>
</dbReference>
<dbReference type="HOGENOM" id="CLU_029499_1_1_6"/>
<dbReference type="OMA" id="VTIMQTR"/>
<dbReference type="Proteomes" id="UP000000558">
    <property type="component" value="Chromosome"/>
</dbReference>
<dbReference type="Proteomes" id="UP000002519">
    <property type="component" value="Chromosome"/>
</dbReference>
<dbReference type="GO" id="GO:0003983">
    <property type="term" value="F:UTP:glucose-1-phosphate uridylyltransferase activity"/>
    <property type="evidence" value="ECO:0007669"/>
    <property type="project" value="UniProtKB-EC"/>
</dbReference>
<dbReference type="GO" id="GO:0009058">
    <property type="term" value="P:biosynthetic process"/>
    <property type="evidence" value="ECO:0007669"/>
    <property type="project" value="InterPro"/>
</dbReference>
<dbReference type="GO" id="GO:0006011">
    <property type="term" value="P:UDP-alpha-D-glucose metabolic process"/>
    <property type="evidence" value="ECO:0007669"/>
    <property type="project" value="InterPro"/>
</dbReference>
<dbReference type="CDD" id="cd02541">
    <property type="entry name" value="UGPase_prokaryotic"/>
    <property type="match status" value="1"/>
</dbReference>
<dbReference type="FunFam" id="3.90.550.10:FF:000008">
    <property type="entry name" value="UTP--glucose-1-phosphate uridylyltransferase"/>
    <property type="match status" value="1"/>
</dbReference>
<dbReference type="Gene3D" id="3.90.550.10">
    <property type="entry name" value="Spore Coat Polysaccharide Biosynthesis Protein SpsA, Chain A"/>
    <property type="match status" value="1"/>
</dbReference>
<dbReference type="InterPro" id="IPR005771">
    <property type="entry name" value="GalU_uridylyltTrfase_bac/arc"/>
</dbReference>
<dbReference type="InterPro" id="IPR005835">
    <property type="entry name" value="NTP_transferase_dom"/>
</dbReference>
<dbReference type="InterPro" id="IPR029044">
    <property type="entry name" value="Nucleotide-diphossugar_trans"/>
</dbReference>
<dbReference type="NCBIfam" id="TIGR01099">
    <property type="entry name" value="galU"/>
    <property type="match status" value="1"/>
</dbReference>
<dbReference type="NCBIfam" id="NF009928">
    <property type="entry name" value="PRK13389.1"/>
    <property type="match status" value="1"/>
</dbReference>
<dbReference type="PANTHER" id="PTHR43197">
    <property type="entry name" value="UTP--GLUCOSE-1-PHOSPHATE URIDYLYLTRANSFERASE"/>
    <property type="match status" value="1"/>
</dbReference>
<dbReference type="PANTHER" id="PTHR43197:SF1">
    <property type="entry name" value="UTP--GLUCOSE-1-PHOSPHATE URIDYLYLTRANSFERASE"/>
    <property type="match status" value="1"/>
</dbReference>
<dbReference type="Pfam" id="PF00483">
    <property type="entry name" value="NTP_transferase"/>
    <property type="match status" value="1"/>
</dbReference>
<dbReference type="SUPFAM" id="SSF53448">
    <property type="entry name" value="Nucleotide-diphospho-sugar transferases"/>
    <property type="match status" value="1"/>
</dbReference>
<name>GALU_ECO57</name>
<evidence type="ECO:0000250" key="1"/>
<evidence type="ECO:0000305" key="2"/>
<protein>
    <recommendedName>
        <fullName>UTP--glucose-1-phosphate uridylyltransferase</fullName>
        <ecNumber>2.7.7.9</ecNumber>
    </recommendedName>
    <alternativeName>
        <fullName>Alpha-D-glucosyl-1-phosphate uridylyltransferase</fullName>
    </alternativeName>
    <alternativeName>
        <fullName>UDP-glucose pyrophosphorylase</fullName>
        <shortName>UDPGP</shortName>
    </alternativeName>
    <alternativeName>
        <fullName>Uridine diphosphoglucose pyrophosphorylase</fullName>
    </alternativeName>
</protein>
<sequence length="302" mass="32942">MAAINTKVKKAVIPVAGLGTRMLPATKAIPKEMLPLVDKPLIQYVVNECIAAGITEIVLVTHSSKNSIENHFDTSFELEAMLEKRVKRQLLDEVQSICPPHVTIMQVRQGLAKGLGHAVLCAHPVVGDEPVAVILPDVILDEYESDLSQDNLAEMIRRFDETGHSQIMVEPVADVTAYGVVDCKGVELAPGESVPMVGVVEKPKADVAPSNLAIVGRYVLSADIWPLLAKTPPGAGDEIQLTDAIDMLIEKETVEAYHMKGKSHDCGNKLGYMQAFVEYGIRHNTLGTEFKAWLEEEMGIKK</sequence>
<comment type="function">
    <text evidence="1">May play a role in stationary phase survival.</text>
</comment>
<comment type="catalytic activity">
    <reaction>
        <text>alpha-D-glucose 1-phosphate + UTP + H(+) = UDP-alpha-D-glucose + diphosphate</text>
        <dbReference type="Rhea" id="RHEA:19889"/>
        <dbReference type="ChEBI" id="CHEBI:15378"/>
        <dbReference type="ChEBI" id="CHEBI:33019"/>
        <dbReference type="ChEBI" id="CHEBI:46398"/>
        <dbReference type="ChEBI" id="CHEBI:58601"/>
        <dbReference type="ChEBI" id="CHEBI:58885"/>
        <dbReference type="EC" id="2.7.7.9"/>
    </reaction>
</comment>
<comment type="cofactor">
    <cofactor evidence="1">
        <name>Mg(2+)</name>
        <dbReference type="ChEBI" id="CHEBI:18420"/>
    </cofactor>
</comment>
<comment type="subunit">
    <text evidence="1">Homotetramer or homopentamer.</text>
</comment>
<comment type="similarity">
    <text evidence="2">Belongs to the UDPGP type 2 family.</text>
</comment>
<reference key="1">
    <citation type="journal article" date="2001" name="Nature">
        <title>Genome sequence of enterohaemorrhagic Escherichia coli O157:H7.</title>
        <authorList>
            <person name="Perna N.T."/>
            <person name="Plunkett G. III"/>
            <person name="Burland V."/>
            <person name="Mau B."/>
            <person name="Glasner J.D."/>
            <person name="Rose D.J."/>
            <person name="Mayhew G.F."/>
            <person name="Evans P.S."/>
            <person name="Gregor J."/>
            <person name="Kirkpatrick H.A."/>
            <person name="Posfai G."/>
            <person name="Hackett J."/>
            <person name="Klink S."/>
            <person name="Boutin A."/>
            <person name="Shao Y."/>
            <person name="Miller L."/>
            <person name="Grotbeck E.J."/>
            <person name="Davis N.W."/>
            <person name="Lim A."/>
            <person name="Dimalanta E.T."/>
            <person name="Potamousis K."/>
            <person name="Apodaca J."/>
            <person name="Anantharaman T.S."/>
            <person name="Lin J."/>
            <person name="Yen G."/>
            <person name="Schwartz D.C."/>
            <person name="Welch R.A."/>
            <person name="Blattner F.R."/>
        </authorList>
    </citation>
    <scope>NUCLEOTIDE SEQUENCE [LARGE SCALE GENOMIC DNA]</scope>
    <source>
        <strain>O157:H7 / EDL933 / ATCC 700927 / EHEC</strain>
    </source>
</reference>
<reference key="2">
    <citation type="journal article" date="2001" name="DNA Res.">
        <title>Complete genome sequence of enterohemorrhagic Escherichia coli O157:H7 and genomic comparison with a laboratory strain K-12.</title>
        <authorList>
            <person name="Hayashi T."/>
            <person name="Makino K."/>
            <person name="Ohnishi M."/>
            <person name="Kurokawa K."/>
            <person name="Ishii K."/>
            <person name="Yokoyama K."/>
            <person name="Han C.-G."/>
            <person name="Ohtsubo E."/>
            <person name="Nakayama K."/>
            <person name="Murata T."/>
            <person name="Tanaka M."/>
            <person name="Tobe T."/>
            <person name="Iida T."/>
            <person name="Takami H."/>
            <person name="Honda T."/>
            <person name="Sasakawa C."/>
            <person name="Ogasawara N."/>
            <person name="Yasunaga T."/>
            <person name="Kuhara S."/>
            <person name="Shiba T."/>
            <person name="Hattori M."/>
            <person name="Shinagawa H."/>
        </authorList>
    </citation>
    <scope>NUCLEOTIDE SEQUENCE [LARGE SCALE GENOMIC DNA]</scope>
    <source>
        <strain>O157:H7 / Sakai / RIMD 0509952 / EHEC</strain>
    </source>
</reference>
<proteinExistence type="inferred from homology"/>
<gene>
    <name type="primary">galU</name>
    <name type="ordered locus">Z2012</name>
    <name type="ordered locus">ECs1738</name>
</gene>
<organism>
    <name type="scientific">Escherichia coli O157:H7</name>
    <dbReference type="NCBI Taxonomy" id="83334"/>
    <lineage>
        <taxon>Bacteria</taxon>
        <taxon>Pseudomonadati</taxon>
        <taxon>Pseudomonadota</taxon>
        <taxon>Gammaproteobacteria</taxon>
        <taxon>Enterobacterales</taxon>
        <taxon>Enterobacteriaceae</taxon>
        <taxon>Escherichia</taxon>
    </lineage>
</organism>
<accession>P0AEP5</accession>
<accession>P25520</accession>
<feature type="initiator methionine" description="Removed" evidence="1">
    <location>
        <position position="1"/>
    </location>
</feature>
<feature type="chain" id="PRO_0000201355" description="UTP--glucose-1-phosphate uridylyltransferase">
    <location>
        <begin position="2"/>
        <end position="302"/>
    </location>
</feature>